<evidence type="ECO:0000250" key="1"/>
<evidence type="ECO:0000255" key="2">
    <source>
        <dbReference type="PROSITE-ProRule" id="PRU01210"/>
    </source>
</evidence>
<evidence type="ECO:0000269" key="3">
    <source>
    </source>
</evidence>
<evidence type="ECO:0000305" key="4"/>
<evidence type="ECO:0000305" key="5">
    <source>
    </source>
</evidence>
<proteinExistence type="evidence at protein level"/>
<accession>P0C292</accession>
<reference key="1">
    <citation type="journal article" date="2006" name="Toxicon">
        <title>Characterization of venom components from the scorpion Androctonus crassicauda of Turkey: peptides and genes.</title>
        <authorList>
            <person name="Caliskan F."/>
            <person name="Garcia B.I."/>
            <person name="Coronas F.I.V."/>
            <person name="Batista C.V.F."/>
            <person name="Zamudio F.Z."/>
            <person name="Possani L.D."/>
        </authorList>
    </citation>
    <scope>NUCLEOTIDE SEQUENCE [MRNA]</scope>
    <scope>PROTEIN SEQUENCE OF 23-80</scope>
    <scope>MASS SPECTROMETRY</scope>
    <scope>SUBCELLULAR LOCATION</scope>
    <source>
        <tissue>Venom</tissue>
        <tissue>Venom gland</tissue>
    </source>
</reference>
<feature type="signal peptide" evidence="3">
    <location>
        <begin position="1"/>
        <end position="22"/>
    </location>
</feature>
<feature type="chain" id="PRO_0000271319" description="Toxin Acra1">
    <location>
        <begin position="23"/>
        <end position="80"/>
    </location>
</feature>
<feature type="domain" description="LCN-type CS-alpha/beta" evidence="2">
    <location>
        <begin position="25"/>
        <end position="80"/>
    </location>
</feature>
<feature type="disulfide bond" evidence="2">
    <location>
        <begin position="40"/>
        <end position="63"/>
    </location>
</feature>
<feature type="disulfide bond" evidence="2">
    <location>
        <begin position="49"/>
        <end position="68"/>
    </location>
</feature>
<feature type="disulfide bond" evidence="2">
    <location>
        <begin position="53"/>
        <end position="70"/>
    </location>
</feature>
<protein>
    <recommendedName>
        <fullName>Toxin Acra1</fullName>
    </recommendedName>
    <alternativeName>
        <fullName>Acra I-1</fullName>
    </alternativeName>
</protein>
<dbReference type="SMR" id="P0C292"/>
<dbReference type="GO" id="GO:0005576">
    <property type="term" value="C:extracellular region"/>
    <property type="evidence" value="ECO:0007669"/>
    <property type="project" value="UniProtKB-SubCell"/>
</dbReference>
<dbReference type="GO" id="GO:0019871">
    <property type="term" value="F:sodium channel inhibitor activity"/>
    <property type="evidence" value="ECO:0007669"/>
    <property type="project" value="InterPro"/>
</dbReference>
<dbReference type="GO" id="GO:0090729">
    <property type="term" value="F:toxin activity"/>
    <property type="evidence" value="ECO:0007669"/>
    <property type="project" value="UniProtKB-KW"/>
</dbReference>
<dbReference type="CDD" id="cd23106">
    <property type="entry name" value="neurotoxins_LC_scorpion"/>
    <property type="match status" value="1"/>
</dbReference>
<dbReference type="FunFam" id="3.30.30.10:FF:000008">
    <property type="entry name" value="Toxin-like peptide AaF1CA7"/>
    <property type="match status" value="1"/>
</dbReference>
<dbReference type="Gene3D" id="3.30.30.10">
    <property type="entry name" value="Knottin, scorpion toxin-like"/>
    <property type="match status" value="1"/>
</dbReference>
<dbReference type="InterPro" id="IPR044062">
    <property type="entry name" value="LCN-type_CS_alpha_beta_dom"/>
</dbReference>
<dbReference type="InterPro" id="IPR036574">
    <property type="entry name" value="Scorpion_toxin-like_sf"/>
</dbReference>
<dbReference type="InterPro" id="IPR002061">
    <property type="entry name" value="Scorpion_toxinL/defensin"/>
</dbReference>
<dbReference type="Pfam" id="PF00537">
    <property type="entry name" value="Toxin_3"/>
    <property type="match status" value="1"/>
</dbReference>
<dbReference type="SUPFAM" id="SSF57095">
    <property type="entry name" value="Scorpion toxin-like"/>
    <property type="match status" value="1"/>
</dbReference>
<dbReference type="PROSITE" id="PS51863">
    <property type="entry name" value="LCN_CSAB"/>
    <property type="match status" value="1"/>
</dbReference>
<keyword id="KW-0903">Direct protein sequencing</keyword>
<keyword id="KW-1015">Disulfide bond</keyword>
<keyword id="KW-0872">Ion channel impairing toxin</keyword>
<keyword id="KW-0528">Neurotoxin</keyword>
<keyword id="KW-0964">Secreted</keyword>
<keyword id="KW-0732">Signal</keyword>
<keyword id="KW-0800">Toxin</keyword>
<sequence>MMKLVLFSIIVILFSLIGSIHGADVPGNYPLDSSGNKYPCTVLGDNQSCIDVCKKHGVKYGYCYSFKCWCEFLEDKNVSI</sequence>
<comment type="function">
    <text evidence="1">Probable neurotoxin that inhibits ion channels (By similarity). Is toxic to mice. Is about 2.8% of the total protein in the venom.</text>
</comment>
<comment type="subcellular location">
    <subcellularLocation>
        <location evidence="3">Secreted</location>
    </subcellularLocation>
</comment>
<comment type="tissue specificity">
    <text evidence="5">Expressed by the venom gland.</text>
</comment>
<comment type="domain">
    <text evidence="4">Has the structural arrangement of an alpha-helix connected to antiparallel beta-sheets by disulfide bonds (CS-alpha/beta).</text>
</comment>
<comment type="mass spectrometry"/>
<comment type="similarity">
    <text evidence="4">Belongs to the long (3 C-C) scorpion toxin superfamily. Sodium/Potassium channel inhibitor family.</text>
</comment>
<name>TX11_ANDCR</name>
<organism>
    <name type="scientific">Androctonus crassicauda</name>
    <name type="common">Arabian fat-tailed scorpion</name>
    <dbReference type="NCBI Taxonomy" id="122909"/>
    <lineage>
        <taxon>Eukaryota</taxon>
        <taxon>Metazoa</taxon>
        <taxon>Ecdysozoa</taxon>
        <taxon>Arthropoda</taxon>
        <taxon>Chelicerata</taxon>
        <taxon>Arachnida</taxon>
        <taxon>Scorpiones</taxon>
        <taxon>Buthida</taxon>
        <taxon>Buthoidea</taxon>
        <taxon>Buthidae</taxon>
        <taxon>Androctonus</taxon>
    </lineage>
</organism>